<dbReference type="EC" id="2.5.1.141" evidence="1"/>
<dbReference type="EMBL" id="AE014184">
    <property type="protein sequence ID" value="AAO44436.1"/>
    <property type="molecule type" value="Genomic_DNA"/>
</dbReference>
<dbReference type="SMR" id="Q83GF8"/>
<dbReference type="STRING" id="203267.TWT_339"/>
<dbReference type="KEGG" id="twh:TWT_339"/>
<dbReference type="eggNOG" id="COG0109">
    <property type="taxonomic scope" value="Bacteria"/>
</dbReference>
<dbReference type="HOGENOM" id="CLU_029631_0_1_11"/>
<dbReference type="OrthoDB" id="9814417at2"/>
<dbReference type="UniPathway" id="UPA00834">
    <property type="reaction ID" value="UER00712"/>
</dbReference>
<dbReference type="Proteomes" id="UP000002200">
    <property type="component" value="Chromosome"/>
</dbReference>
<dbReference type="GO" id="GO:0005886">
    <property type="term" value="C:plasma membrane"/>
    <property type="evidence" value="ECO:0007669"/>
    <property type="project" value="UniProtKB-SubCell"/>
</dbReference>
<dbReference type="GO" id="GO:0008495">
    <property type="term" value="F:protoheme IX farnesyltransferase activity"/>
    <property type="evidence" value="ECO:0007669"/>
    <property type="project" value="UniProtKB-UniRule"/>
</dbReference>
<dbReference type="GO" id="GO:0048034">
    <property type="term" value="P:heme O biosynthetic process"/>
    <property type="evidence" value="ECO:0007669"/>
    <property type="project" value="UniProtKB-UniRule"/>
</dbReference>
<dbReference type="CDD" id="cd13957">
    <property type="entry name" value="PT_UbiA_Cox10"/>
    <property type="match status" value="1"/>
</dbReference>
<dbReference type="FunFam" id="1.10.357.140:FF:000001">
    <property type="entry name" value="Protoheme IX farnesyltransferase"/>
    <property type="match status" value="1"/>
</dbReference>
<dbReference type="Gene3D" id="1.10.357.140">
    <property type="entry name" value="UbiA prenyltransferase"/>
    <property type="match status" value="1"/>
</dbReference>
<dbReference type="HAMAP" id="MF_00154">
    <property type="entry name" value="CyoE_CtaB"/>
    <property type="match status" value="1"/>
</dbReference>
<dbReference type="InterPro" id="IPR006369">
    <property type="entry name" value="Protohaem_IX_farnesylTrfase"/>
</dbReference>
<dbReference type="InterPro" id="IPR000537">
    <property type="entry name" value="UbiA_prenyltransferase"/>
</dbReference>
<dbReference type="InterPro" id="IPR030470">
    <property type="entry name" value="UbiA_prenylTrfase_CS"/>
</dbReference>
<dbReference type="InterPro" id="IPR044878">
    <property type="entry name" value="UbiA_sf"/>
</dbReference>
<dbReference type="NCBIfam" id="TIGR01473">
    <property type="entry name" value="cyoE_ctaB"/>
    <property type="match status" value="1"/>
</dbReference>
<dbReference type="NCBIfam" id="NF003349">
    <property type="entry name" value="PRK04375.1-2"/>
    <property type="match status" value="1"/>
</dbReference>
<dbReference type="PANTHER" id="PTHR43448:SF7">
    <property type="entry name" value="4-HYDROXYBENZOATE SOLANESYLTRANSFERASE"/>
    <property type="match status" value="1"/>
</dbReference>
<dbReference type="PANTHER" id="PTHR43448">
    <property type="entry name" value="PROTOHEME IX FARNESYLTRANSFERASE, MITOCHONDRIAL"/>
    <property type="match status" value="1"/>
</dbReference>
<dbReference type="Pfam" id="PF01040">
    <property type="entry name" value="UbiA"/>
    <property type="match status" value="1"/>
</dbReference>
<dbReference type="PROSITE" id="PS00943">
    <property type="entry name" value="UBIA"/>
    <property type="match status" value="1"/>
</dbReference>
<comment type="function">
    <text evidence="1">Converts heme B (protoheme IX) to heme O by substitution of the vinyl group on carbon 2 of heme B porphyrin ring with a hydroxyethyl farnesyl side group.</text>
</comment>
<comment type="catalytic activity">
    <reaction evidence="1">
        <text>heme b + (2E,6E)-farnesyl diphosphate + H2O = Fe(II)-heme o + diphosphate</text>
        <dbReference type="Rhea" id="RHEA:28070"/>
        <dbReference type="ChEBI" id="CHEBI:15377"/>
        <dbReference type="ChEBI" id="CHEBI:33019"/>
        <dbReference type="ChEBI" id="CHEBI:60344"/>
        <dbReference type="ChEBI" id="CHEBI:60530"/>
        <dbReference type="ChEBI" id="CHEBI:175763"/>
        <dbReference type="EC" id="2.5.1.141"/>
    </reaction>
</comment>
<comment type="pathway">
    <text evidence="1">Porphyrin-containing compound metabolism; heme O biosynthesis; heme O from protoheme: step 1/1.</text>
</comment>
<comment type="subcellular location">
    <subcellularLocation>
        <location evidence="1">Cell membrane</location>
        <topology evidence="1">Multi-pass membrane protein</topology>
    </subcellularLocation>
</comment>
<comment type="miscellaneous">
    <text evidence="1">Carbon 2 of the heme B porphyrin ring is defined according to the Fischer nomenclature.</text>
</comment>
<comment type="similarity">
    <text evidence="1">Belongs to the UbiA prenyltransferase family. Protoheme IX farnesyltransferase subfamily.</text>
</comment>
<sequence length="300" mass="33279">MGMQGRSFARQIRAYVSLTKPRVVELLLLTTVPTMILAQRGVPNPLSVLSVLLGGAMSAGAAGAFNCYIDRDIDSKMSRTRNRPLVTGALSPKASLIFAWMLCVISVLWFLLFVNWLSALLSAIAVFLYAFFYSIVLKKRTPQNIVWGGLAGCMPVLIAWAAVTGSIDWPAIVLFAVVFLWTPPHYWPLSIHYSEDYRLTSIPMLGAIFPRKLVVLQVLLYAFAVVACTLLLIPVAHMTPLYGLFSAVLGAWFVYEIYRLYVRVVRGHEIKAMHIFSLSNTYLSLVFLSVGIDGVVSQLL</sequence>
<organism>
    <name type="scientific">Tropheryma whipplei (strain Twist)</name>
    <name type="common">Whipple's bacillus</name>
    <dbReference type="NCBI Taxonomy" id="203267"/>
    <lineage>
        <taxon>Bacteria</taxon>
        <taxon>Bacillati</taxon>
        <taxon>Actinomycetota</taxon>
        <taxon>Actinomycetes</taxon>
        <taxon>Micrococcales</taxon>
        <taxon>Tropherymataceae</taxon>
        <taxon>Tropheryma</taxon>
    </lineage>
</organism>
<proteinExistence type="inferred from homology"/>
<feature type="chain" id="PRO_0000327187" description="Protoheme IX farnesyltransferase">
    <location>
        <begin position="1"/>
        <end position="300"/>
    </location>
</feature>
<feature type="transmembrane region" description="Helical" evidence="1">
    <location>
        <begin position="21"/>
        <end position="43"/>
    </location>
</feature>
<feature type="transmembrane region" description="Helical" evidence="1">
    <location>
        <begin position="45"/>
        <end position="65"/>
    </location>
</feature>
<feature type="transmembrane region" description="Helical" evidence="1">
    <location>
        <begin position="94"/>
        <end position="114"/>
    </location>
</feature>
<feature type="transmembrane region" description="Helical" evidence="1">
    <location>
        <begin position="117"/>
        <end position="137"/>
    </location>
</feature>
<feature type="transmembrane region" description="Helical" evidence="1">
    <location>
        <begin position="145"/>
        <end position="167"/>
    </location>
</feature>
<feature type="transmembrane region" description="Helical" evidence="1">
    <location>
        <begin position="171"/>
        <end position="193"/>
    </location>
</feature>
<feature type="transmembrane region" description="Helical" evidence="1">
    <location>
        <begin position="213"/>
        <end position="233"/>
    </location>
</feature>
<feature type="transmembrane region" description="Helical" evidence="1">
    <location>
        <begin position="235"/>
        <end position="255"/>
    </location>
</feature>
<feature type="transmembrane region" description="Helical" evidence="1">
    <location>
        <begin position="272"/>
        <end position="292"/>
    </location>
</feature>
<accession>Q83GF8</accession>
<evidence type="ECO:0000255" key="1">
    <source>
        <dbReference type="HAMAP-Rule" id="MF_00154"/>
    </source>
</evidence>
<keyword id="KW-1003">Cell membrane</keyword>
<keyword id="KW-0350">Heme biosynthesis</keyword>
<keyword id="KW-0472">Membrane</keyword>
<keyword id="KW-1185">Reference proteome</keyword>
<keyword id="KW-0808">Transferase</keyword>
<keyword id="KW-0812">Transmembrane</keyword>
<keyword id="KW-1133">Transmembrane helix</keyword>
<name>COXX_TROWT</name>
<reference key="1">
    <citation type="journal article" date="2003" name="Genome Res.">
        <title>Tropheryma whipplei twist: a human pathogenic Actinobacteria with a reduced genome.</title>
        <authorList>
            <person name="Raoult D."/>
            <person name="Ogata H."/>
            <person name="Audic S."/>
            <person name="Robert C."/>
            <person name="Suhre K."/>
            <person name="Drancourt M."/>
            <person name="Claverie J.-M."/>
        </authorList>
    </citation>
    <scope>NUCLEOTIDE SEQUENCE [LARGE SCALE GENOMIC DNA]</scope>
    <source>
        <strain>Twist</strain>
    </source>
</reference>
<protein>
    <recommendedName>
        <fullName evidence="1">Protoheme IX farnesyltransferase</fullName>
        <ecNumber evidence="1">2.5.1.141</ecNumber>
    </recommendedName>
    <alternativeName>
        <fullName evidence="1">Heme B farnesyltransferase</fullName>
    </alternativeName>
    <alternativeName>
        <fullName evidence="1">Heme O synthase</fullName>
    </alternativeName>
</protein>
<gene>
    <name evidence="1" type="primary">ctaB</name>
    <name type="ordered locus">TWT_339</name>
</gene>